<feature type="signal peptide" evidence="1">
    <location>
        <begin position="1"/>
        <end position="23"/>
    </location>
</feature>
<feature type="chain" id="PRO_0000029353" description="Photosystem I reaction center subunit III">
    <location>
        <begin position="24"/>
        <end position="164"/>
    </location>
</feature>
<protein>
    <recommendedName>
        <fullName>Photosystem I reaction center subunit III</fullName>
    </recommendedName>
    <alternativeName>
        <fullName>PSI-F</fullName>
    </alternativeName>
</protein>
<evidence type="ECO:0000269" key="1">
    <source>
    </source>
</evidence>
<evidence type="ECO:0000305" key="2"/>
<sequence>MRRFLALLLVLTLWLGFTPLASADVAGLVPCKDSPAFQKRAAAAVNTTADPASGQKRFERYSQALCGEDGLPHLVVDGRLSRAGDFLIPSVLFLYIAGWIGWVGRAYLIAVRNSGEANEKEIIIDVPLAIKCMLTGFAWPLAALKELASGELTAKDNEITVSPR</sequence>
<gene>
    <name type="primary">psaF</name>
</gene>
<organism>
    <name type="scientific">Synechococcus elongatus</name>
    <dbReference type="NCBI Taxonomy" id="32046"/>
    <lineage>
        <taxon>Bacteria</taxon>
        <taxon>Bacillati</taxon>
        <taxon>Cyanobacteriota</taxon>
        <taxon>Cyanophyceae</taxon>
        <taxon>Synechococcales</taxon>
        <taxon>Synechococcaceae</taxon>
        <taxon>Synechococcus</taxon>
    </lineage>
</organism>
<reference key="1">
    <citation type="journal article" date="1993" name="Gene">
        <title>Genes encoding eleven subunits of photosystem I from the thermophilic cyanobacterium Synechococcus sp.</title>
        <authorList>
            <person name="Muehlenhoff U."/>
            <person name="Haehnel W."/>
            <person name="Witt H.T."/>
            <person name="Herrmann R.G."/>
        </authorList>
    </citation>
    <scope>NUCLEOTIDE SEQUENCE [GENOMIC DNA]</scope>
</reference>
<reference key="2">
    <citation type="journal article" date="1993" name="Biochim. Biophys. Acta">
        <title>Small subunits of Photosystem I reaction center complexes from Synechococcus elongatus. I. Is the psaF gene product required for oxidation of cytochrome c-553?</title>
        <authorList>
            <person name="Hatanaka H."/>
            <person name="Sonoike K."/>
            <person name="Hirano M."/>
            <person name="Katoh S."/>
        </authorList>
    </citation>
    <scope>PROTEIN SEQUENCE OF 24-38</scope>
</reference>
<reference key="3">
    <citation type="journal article" date="1996" name="Nat. Struct. Biol.">
        <title>Photosystem I at 4-A resolution represents the first structural model of a joint photosynthetic reaction centre and core antenna system.</title>
        <authorList>
            <person name="Krauss N."/>
            <person name="Schubert W.-D."/>
            <person name="Klukas O."/>
            <person name="Fromme P."/>
            <person name="Witt H.T."/>
            <person name="Saenger W."/>
        </authorList>
    </citation>
    <scope>X-RAY CRYSTALLOGRAPHY (4.0 ANGSTROMS)</scope>
</reference>
<dbReference type="EMBL" id="X63765">
    <property type="protein sequence ID" value="CAA45299.1"/>
    <property type="molecule type" value="Genomic_DNA"/>
</dbReference>
<dbReference type="SMR" id="P0A402"/>
<dbReference type="GO" id="GO:0009538">
    <property type="term" value="C:photosystem I reaction center"/>
    <property type="evidence" value="ECO:0007669"/>
    <property type="project" value="InterPro"/>
</dbReference>
<dbReference type="GO" id="GO:0015979">
    <property type="term" value="P:photosynthesis"/>
    <property type="evidence" value="ECO:0007669"/>
    <property type="project" value="UniProtKB-KW"/>
</dbReference>
<dbReference type="Gene3D" id="1.10.8.110">
    <property type="entry name" value="Photosystem I PsaF, reaction centre subunit III"/>
    <property type="match status" value="1"/>
</dbReference>
<dbReference type="InterPro" id="IPR003666">
    <property type="entry name" value="PSI_PsaF"/>
</dbReference>
<dbReference type="InterPro" id="IPR036577">
    <property type="entry name" value="PSI_PsaF_sf"/>
</dbReference>
<dbReference type="PANTHER" id="PTHR34939">
    <property type="entry name" value="PHOTOSYSTEM I REACTION CENTER SUBUNIT III, CHLOROPLASTIC"/>
    <property type="match status" value="1"/>
</dbReference>
<dbReference type="PANTHER" id="PTHR34939:SF1">
    <property type="entry name" value="PHOTOSYSTEM I REACTION CENTER SUBUNIT III, CHLOROPLASTIC"/>
    <property type="match status" value="1"/>
</dbReference>
<dbReference type="Pfam" id="PF02507">
    <property type="entry name" value="PSI_PsaF"/>
    <property type="match status" value="1"/>
</dbReference>
<dbReference type="SUPFAM" id="SSF81536">
    <property type="entry name" value="Subunit III of photosystem I reaction centre, PsaF"/>
    <property type="match status" value="1"/>
</dbReference>
<name>PSAF_SYNEL</name>
<keyword id="KW-0903">Direct protein sequencing</keyword>
<keyword id="KW-0602">Photosynthesis</keyword>
<keyword id="KW-0603">Photosystem I</keyword>
<keyword id="KW-0732">Signal</keyword>
<comment type="function">
    <text>Probably participates in efficiency of electron transfer from plastocyanin to P700 (or cytochrome c553 in algae and cyanobacteria). This plastocyanin-docking protein contributes to the specific association of plastocyanin to PSI.</text>
</comment>
<comment type="similarity">
    <text evidence="2">Belongs to the PsaF family.</text>
</comment>
<accession>P0A402</accession>
<accession>P25899</accession>
<proteinExistence type="evidence at protein level"/>